<proteinExistence type="evidence at protein level"/>
<gene>
    <name evidence="12" type="primary">hpl-1</name>
    <name evidence="12" type="ORF">K08H2.6</name>
</gene>
<dbReference type="EMBL" id="AF056580">
    <property type="protein sequence ID" value="AAC78602.1"/>
    <property type="molecule type" value="mRNA"/>
</dbReference>
<dbReference type="EMBL" id="BX284606">
    <property type="protein sequence ID" value="CAA94152.1"/>
    <property type="molecule type" value="Genomic_DNA"/>
</dbReference>
<dbReference type="PIR" id="T23518">
    <property type="entry name" value="T23518"/>
</dbReference>
<dbReference type="RefSeq" id="NP_510199.1">
    <property type="nucleotide sequence ID" value="NM_077798.5"/>
</dbReference>
<dbReference type="SMR" id="G5EET5"/>
<dbReference type="FunCoup" id="G5EET5">
    <property type="interactions" value="1754"/>
</dbReference>
<dbReference type="IntAct" id="G5EET5">
    <property type="interactions" value="1"/>
</dbReference>
<dbReference type="STRING" id="6239.K08H2.6.1"/>
<dbReference type="PaxDb" id="6239-K08H2.6"/>
<dbReference type="PeptideAtlas" id="G5EET5"/>
<dbReference type="EnsemblMetazoa" id="K08H2.6.1">
    <property type="protein sequence ID" value="K08H2.6.1"/>
    <property type="gene ID" value="WBGene00001995"/>
</dbReference>
<dbReference type="GeneID" id="181450"/>
<dbReference type="KEGG" id="cel:CELE_K08H2.6"/>
<dbReference type="AGR" id="WB:WBGene00001995"/>
<dbReference type="CTD" id="181450"/>
<dbReference type="WormBase" id="K08H2.6">
    <property type="protein sequence ID" value="CE06164"/>
    <property type="gene ID" value="WBGene00001995"/>
    <property type="gene designation" value="hpl-1"/>
</dbReference>
<dbReference type="eggNOG" id="KOG1911">
    <property type="taxonomic scope" value="Eukaryota"/>
</dbReference>
<dbReference type="GeneTree" id="ENSGT00940000175144"/>
<dbReference type="HOGENOM" id="CLU_045874_1_2_1"/>
<dbReference type="InParanoid" id="G5EET5"/>
<dbReference type="OMA" id="EANMKCL"/>
<dbReference type="OrthoDB" id="433924at2759"/>
<dbReference type="PhylomeDB" id="G5EET5"/>
<dbReference type="Reactome" id="R-CEL-73772">
    <property type="pathway name" value="RNA Polymerase I Promoter Escape"/>
</dbReference>
<dbReference type="Reactome" id="R-CEL-983231">
    <property type="pathway name" value="Factors involved in megakaryocyte development and platelet production"/>
</dbReference>
<dbReference type="PRO" id="PR:G5EET5"/>
<dbReference type="Proteomes" id="UP000001940">
    <property type="component" value="Chromosome X"/>
</dbReference>
<dbReference type="Bgee" id="WBGene00001995">
    <property type="expression patterns" value="Expressed in pharyngeal muscle cell (C elegans) and 4 other cell types or tissues"/>
</dbReference>
<dbReference type="GO" id="GO:0000792">
    <property type="term" value="C:heterochromatin"/>
    <property type="evidence" value="ECO:0000314"/>
    <property type="project" value="WormBase"/>
</dbReference>
<dbReference type="GO" id="GO:0005634">
    <property type="term" value="C:nucleus"/>
    <property type="evidence" value="ECO:0000314"/>
    <property type="project" value="WormBase"/>
</dbReference>
<dbReference type="GO" id="GO:0005721">
    <property type="term" value="C:pericentric heterochromatin"/>
    <property type="evidence" value="ECO:0000318"/>
    <property type="project" value="GO_Central"/>
</dbReference>
<dbReference type="GO" id="GO:0003682">
    <property type="term" value="F:chromatin binding"/>
    <property type="evidence" value="ECO:0000318"/>
    <property type="project" value="GO_Central"/>
</dbReference>
<dbReference type="GO" id="GO:0019899">
    <property type="term" value="F:enzyme binding"/>
    <property type="evidence" value="ECO:0000353"/>
    <property type="project" value="WormBase"/>
</dbReference>
<dbReference type="GO" id="GO:0035064">
    <property type="term" value="F:methylated histone binding"/>
    <property type="evidence" value="ECO:0000353"/>
    <property type="project" value="UniProtKB"/>
</dbReference>
<dbReference type="GO" id="GO:0007281">
    <property type="term" value="P:germ cell development"/>
    <property type="evidence" value="ECO:0000316"/>
    <property type="project" value="WormBase"/>
</dbReference>
<dbReference type="GO" id="GO:0008406">
    <property type="term" value="P:gonad development"/>
    <property type="evidence" value="ECO:0000316"/>
    <property type="project" value="WormBase"/>
</dbReference>
<dbReference type="GO" id="GO:0031507">
    <property type="term" value="P:heterochromatin formation"/>
    <property type="evidence" value="ECO:0000318"/>
    <property type="project" value="GO_Central"/>
</dbReference>
<dbReference type="GO" id="GO:0010629">
    <property type="term" value="P:negative regulation of gene expression"/>
    <property type="evidence" value="ECO:0000315"/>
    <property type="project" value="UniProtKB"/>
</dbReference>
<dbReference type="GO" id="GO:0046580">
    <property type="term" value="P:negative regulation of Ras protein signal transduction"/>
    <property type="evidence" value="ECO:0000316"/>
    <property type="project" value="WormBase"/>
</dbReference>
<dbReference type="GO" id="GO:0040027">
    <property type="term" value="P:negative regulation of vulval development"/>
    <property type="evidence" value="ECO:0000316"/>
    <property type="project" value="WormBase"/>
</dbReference>
<dbReference type="GO" id="GO:0002119">
    <property type="term" value="P:nematode larval development"/>
    <property type="evidence" value="ECO:0000316"/>
    <property type="project" value="WormBase"/>
</dbReference>
<dbReference type="GO" id="GO:0040010">
    <property type="term" value="P:positive regulation of growth rate"/>
    <property type="evidence" value="ECO:0000316"/>
    <property type="project" value="WormBase"/>
</dbReference>
<dbReference type="GO" id="GO:0045595">
    <property type="term" value="P:regulation of cell differentiation"/>
    <property type="evidence" value="ECO:0000316"/>
    <property type="project" value="WormBase"/>
</dbReference>
<dbReference type="GO" id="GO:0022414">
    <property type="term" value="P:reproductive process"/>
    <property type="evidence" value="ECO:0000316"/>
    <property type="project" value="WormBase"/>
</dbReference>
<dbReference type="CDD" id="cd18960">
    <property type="entry name" value="CD_HP1_like"/>
    <property type="match status" value="1"/>
</dbReference>
<dbReference type="CDD" id="cd00034">
    <property type="entry name" value="CSD"/>
    <property type="match status" value="1"/>
</dbReference>
<dbReference type="Gene3D" id="2.40.50.40">
    <property type="match status" value="2"/>
</dbReference>
<dbReference type="InterPro" id="IPR016197">
    <property type="entry name" value="Chromo-like_dom_sf"/>
</dbReference>
<dbReference type="InterPro" id="IPR000953">
    <property type="entry name" value="Chromo/chromo_shadow_dom"/>
</dbReference>
<dbReference type="InterPro" id="IPR017984">
    <property type="entry name" value="Chromo_dom_subgr"/>
</dbReference>
<dbReference type="InterPro" id="IPR023780">
    <property type="entry name" value="Chromo_domain"/>
</dbReference>
<dbReference type="InterPro" id="IPR008251">
    <property type="entry name" value="Chromo_shadow_dom"/>
</dbReference>
<dbReference type="InterPro" id="IPR023779">
    <property type="entry name" value="Chromodomain_CS"/>
</dbReference>
<dbReference type="InterPro" id="IPR051219">
    <property type="entry name" value="Heterochromatin_chromo-domain"/>
</dbReference>
<dbReference type="PANTHER" id="PTHR22812">
    <property type="entry name" value="CHROMOBOX PROTEIN"/>
    <property type="match status" value="1"/>
</dbReference>
<dbReference type="Pfam" id="PF00385">
    <property type="entry name" value="Chromo"/>
    <property type="match status" value="1"/>
</dbReference>
<dbReference type="Pfam" id="PF01393">
    <property type="entry name" value="Chromo_shadow"/>
    <property type="match status" value="1"/>
</dbReference>
<dbReference type="PRINTS" id="PR00504">
    <property type="entry name" value="CHROMODOMAIN"/>
</dbReference>
<dbReference type="SMART" id="SM00298">
    <property type="entry name" value="CHROMO"/>
    <property type="match status" value="1"/>
</dbReference>
<dbReference type="SMART" id="SM00300">
    <property type="entry name" value="ChSh"/>
    <property type="match status" value="1"/>
</dbReference>
<dbReference type="SUPFAM" id="SSF54160">
    <property type="entry name" value="Chromo domain-like"/>
    <property type="match status" value="2"/>
</dbReference>
<dbReference type="PROSITE" id="PS00598">
    <property type="entry name" value="CHROMO_1"/>
    <property type="match status" value="1"/>
</dbReference>
<dbReference type="PROSITE" id="PS50013">
    <property type="entry name" value="CHROMO_2"/>
    <property type="match status" value="1"/>
</dbReference>
<name>CBXH1_CAEEL</name>
<reference evidence="10" key="1">
    <citation type="submission" date="1998-04" db="EMBL/GenBank/DDBJ databases">
        <title>A Heterochromatin Protein 1 homolog in C.elegans.</title>
        <authorList>
            <person name="Kurz T."/>
            <person name="Schulze E."/>
        </authorList>
    </citation>
    <scope>NUCLEOTIDE SEQUENCE [MRNA]</scope>
    <source>
        <strain evidence="10">Bristol N2</strain>
    </source>
</reference>
<reference evidence="11" key="2">
    <citation type="journal article" date="1998" name="Science">
        <title>Genome sequence of the nematode C. elegans: a platform for investigating biology.</title>
        <authorList>
            <consortium name="The C. elegans sequencing consortium"/>
        </authorList>
    </citation>
    <scope>NUCLEOTIDE SEQUENCE [LARGE SCALE GENOMIC DNA]</scope>
    <source>
        <strain evidence="11">Bristol N2</strain>
    </source>
</reference>
<reference evidence="9" key="3">
    <citation type="journal article" date="2006" name="Dev. Biol.">
        <title>Unique and redundant functions of C. elegans HP1 proteins in post-embryonic development.</title>
        <authorList>
            <person name="Schott S."/>
            <person name="Coustham V."/>
            <person name="Simonet T."/>
            <person name="Bedet C."/>
            <person name="Palladino F."/>
        </authorList>
    </citation>
    <scope>FUNCTION</scope>
    <scope>SUBCELLULAR LOCATION</scope>
    <scope>DEVELOPMENTAL STAGE</scope>
    <scope>DISRUPTION PHENOTYPE</scope>
</reference>
<reference evidence="9" key="4">
    <citation type="journal article" date="2007" name="Dev. Biol.">
        <title>Antagonistic functions of SET-2/SET1 and HPL/HP1 proteins in C. elegans development.</title>
        <authorList>
            <person name="Simonet T."/>
            <person name="Dulermo R."/>
            <person name="Schott S."/>
            <person name="Palladino F."/>
        </authorList>
    </citation>
    <scope>FUNCTION</scope>
</reference>
<reference evidence="9" key="5">
    <citation type="journal article" date="2012" name="Mol. Cell. Biol.">
        <title>Novel roles of Caenorhabditis elegans heterochromatin protein HP1 and linker histone in the regulation of innate immune gene expression.</title>
        <authorList>
            <person name="Studencka M."/>
            <person name="Konzer A."/>
            <person name="Moneron G."/>
            <person name="Wenzel D."/>
            <person name="Opitz L."/>
            <person name="Salinas-Riester G."/>
            <person name="Bedet C."/>
            <person name="Krueger M."/>
            <person name="Hell S.W."/>
            <person name="Wisniewski J.R."/>
            <person name="Schmidt H."/>
            <person name="Palladino F."/>
            <person name="Schulze E."/>
            <person name="Jedrusik-Bode M."/>
        </authorList>
    </citation>
    <scope>FUNCTION</scope>
    <scope>INTERACTION WITH HIS-24 AND HPL-2</scope>
</reference>
<reference evidence="9" key="6">
    <citation type="journal article" date="2012" name="PLoS Genet.">
        <title>Transcriptional repression of Hox genes by C. elegans HP1/HPL and H1/HIS-24.</title>
        <authorList>
            <person name="Studencka M."/>
            <person name="Wesolowski R."/>
            <person name="Opitz L."/>
            <person name="Salinas-Riester G."/>
            <person name="Wisniewski J.R."/>
            <person name="Jedrusik-Bode M."/>
        </authorList>
    </citation>
    <scope>FUNCTION</scope>
</reference>
<reference evidence="9" key="7">
    <citation type="journal article" date="2015" name="Nucleic Acids Res.">
        <title>H3K23me2 is a new heterochromatic mark in Caenorhabditis elegans.</title>
        <authorList>
            <person name="Vandamme J."/>
            <person name="Sidoli S."/>
            <person name="Mariani L."/>
            <person name="Friis C."/>
            <person name="Christensen J."/>
            <person name="Helin K."/>
            <person name="Jensen O.N."/>
            <person name="Salcini A.E."/>
        </authorList>
    </citation>
    <scope>FUNCTION</scope>
    <scope>SUBCELLULAR LOCATION</scope>
    <scope>INTERACTION WITH HISTONE H3; HPL-2; HDA-1; LSD-1; SPR-5 AND RCOR-1</scope>
</reference>
<accession>G5EET5</accession>
<protein>
    <recommendedName>
        <fullName evidence="9">Chromobox protein homolog hpl-1</fullName>
    </recommendedName>
    <alternativeName>
        <fullName evidence="12">HP1-like heterochromatin protein 1</fullName>
    </alternativeName>
</protein>
<organism evidence="11">
    <name type="scientific">Caenorhabditis elegans</name>
    <dbReference type="NCBI Taxonomy" id="6239"/>
    <lineage>
        <taxon>Eukaryota</taxon>
        <taxon>Metazoa</taxon>
        <taxon>Ecdysozoa</taxon>
        <taxon>Nematoda</taxon>
        <taxon>Chromadorea</taxon>
        <taxon>Rhabditida</taxon>
        <taxon>Rhabditina</taxon>
        <taxon>Rhabditomorpha</taxon>
        <taxon>Rhabditoidea</taxon>
        <taxon>Rhabditidae</taxon>
        <taxon>Peloderinae</taxon>
        <taxon>Caenorhabditis</taxon>
    </lineage>
</organism>
<evidence type="ECO:0000250" key="1">
    <source>
        <dbReference type="UniProtKB" id="Q13185"/>
    </source>
</evidence>
<evidence type="ECO:0000255" key="2">
    <source>
        <dbReference type="PROSITE-ProRule" id="PRU00053"/>
    </source>
</evidence>
<evidence type="ECO:0000256" key="3">
    <source>
        <dbReference type="SAM" id="MobiDB-lite"/>
    </source>
</evidence>
<evidence type="ECO:0000269" key="4">
    <source>
    </source>
</evidence>
<evidence type="ECO:0000269" key="5">
    <source>
    </source>
</evidence>
<evidence type="ECO:0000269" key="6">
    <source>
    </source>
</evidence>
<evidence type="ECO:0000269" key="7">
    <source>
    </source>
</evidence>
<evidence type="ECO:0000269" key="8">
    <source>
    </source>
</evidence>
<evidence type="ECO:0000305" key="9"/>
<evidence type="ECO:0000312" key="10">
    <source>
        <dbReference type="EMBL" id="AAC78602.1"/>
    </source>
</evidence>
<evidence type="ECO:0000312" key="11">
    <source>
        <dbReference type="Proteomes" id="UP000001940"/>
    </source>
</evidence>
<evidence type="ECO:0000312" key="12">
    <source>
        <dbReference type="WormBase" id="K08H2.6"/>
    </source>
</evidence>
<sequence length="184" mass="20885">MSRQNPVRSTRGNSLRAREAQQAQDAPLFQESSSNVFVVEKVLNKRLTRGGSEYYIKWQGFPESECSWEPIENLQCDRMIQEYEKEAAKRTTRKRRYSPQPSTSSSAELQPSTSDEWAGKTLKTIIGITKAPGELHFLCKFSDDSVHLIPLREANVRFPSQVIKFYETRLVLQGVSPTIPGGMS</sequence>
<comment type="function">
    <text evidence="1 4 5 6 7 8">Seems to be involved in transcriptional silencing in heterochromatin-like complexes (By similarity). Involved in epigenetic repression (By similarity). Probably does not act as global transcriptional repressor (PubMed:23028351). Plays a role in linking epigenetic regulation with the innate immune response (PubMed:22083954). Acting in concert with chromobox protein homolog hpl-2 and histone H1 protein his-24, involved in reproduction, somatic gonad development, male tail development and vulval cell fate decisions; perhaps as a result of modulating expression of Hox genes mab-5 and egl-5 (PubMed:16905130, PubMed:23028351). Role in growth and somatic gonad development is antagonized by histone-lysine N-methyltransferase set-2/SET1 (PubMed:17967446). Required for larval development, acting redundantly with hpl-2 (PubMed:16905130, PubMed:26476455). Plays a role in the formation of the vulva and in fertility, acting together with a CoREST-like complex, and hpl-2 (PubMed:16905130, PubMed:26476455).</text>
</comment>
<comment type="subunit">
    <text evidence="6 8">Interacts with histone demethylase spr-5 (PubMed:26476455). Interacts with chromobox protein homolog hpl-2 (PubMed:22083954, PubMed:26476455). Interacts with histone H3 tails methylated at 'Lys-9' (H3K9me3) and 'Lys-23'(H3K23me2) (PubMed:26476455). Interacts with histone H1 variant his-24 (when monomethylated at 'Lys-14'); the interaction is direct (PubMed:22083954). May interact with the REST corepressor rcor-1, histone deacetylase hda-1, and the histone demethylase lsd-1 (PubMed:26476455).</text>
</comment>
<comment type="subcellular location">
    <subcellularLocation>
        <location evidence="4 8">Nucleus</location>
    </subcellularLocation>
    <text evidence="4 8">Partially co-localizes with histone H3 tails methylated at 'Lys-9' (H3K9me3) and 'Lys-23'(H3K23me2) in chromatin (PubMed:26476455). Localizes to distinct nuclear foci, not overlapping significantly with hpl-2, in embryonic cells (PubMed:16905130, PubMed:26476455).</text>
</comment>
<comment type="developmental stage">
    <text evidence="4">Expressed in embryos at about the 50 cell stage (PubMed:16905130). Expressed in most, but not all cells of larvae and adults, especially in neuronal and hypodermal cells (PubMed:16905130).</text>
</comment>
<comment type="disruption phenotype">
    <text evidence="4">RNAi-mediated knockdown in a hpl-2 mutant background causes larval arrest.</text>
</comment>
<keyword id="KW-0156">Chromatin regulator</keyword>
<keyword id="KW-0539">Nucleus</keyword>
<keyword id="KW-1185">Reference proteome</keyword>
<keyword id="KW-0804">Transcription</keyword>
<keyword id="KW-0805">Transcription regulation</keyword>
<feature type="chain" id="PRO_0000455618" description="Chromobox protein homolog hpl-1">
    <location>
        <begin position="1"/>
        <end position="184"/>
    </location>
</feature>
<feature type="domain" description="Chromo" evidence="2">
    <location>
        <begin position="37"/>
        <end position="95"/>
    </location>
</feature>
<feature type="region of interest" description="Disordered" evidence="3">
    <location>
        <begin position="1"/>
        <end position="27"/>
    </location>
</feature>
<feature type="region of interest" description="Disordered" evidence="3">
    <location>
        <begin position="87"/>
        <end position="115"/>
    </location>
</feature>
<feature type="compositionally biased region" description="Polar residues" evidence="3">
    <location>
        <begin position="1"/>
        <end position="13"/>
    </location>
</feature>
<feature type="compositionally biased region" description="Polar residues" evidence="3">
    <location>
        <begin position="99"/>
        <end position="115"/>
    </location>
</feature>